<dbReference type="EC" id="5.3.1.9" evidence="1"/>
<dbReference type="EMBL" id="CP000577">
    <property type="protein sequence ID" value="ABN76504.1"/>
    <property type="molecule type" value="Genomic_DNA"/>
</dbReference>
<dbReference type="RefSeq" id="WP_011840989.1">
    <property type="nucleotide sequence ID" value="NC_009049.1"/>
</dbReference>
<dbReference type="SMR" id="A3PJI8"/>
<dbReference type="KEGG" id="rsh:Rsph17029_1394"/>
<dbReference type="HOGENOM" id="CLU_017947_3_1_5"/>
<dbReference type="UniPathway" id="UPA00109">
    <property type="reaction ID" value="UER00181"/>
</dbReference>
<dbReference type="UniPathway" id="UPA00138"/>
<dbReference type="GO" id="GO:0005829">
    <property type="term" value="C:cytosol"/>
    <property type="evidence" value="ECO:0007669"/>
    <property type="project" value="TreeGrafter"/>
</dbReference>
<dbReference type="GO" id="GO:0097367">
    <property type="term" value="F:carbohydrate derivative binding"/>
    <property type="evidence" value="ECO:0007669"/>
    <property type="project" value="InterPro"/>
</dbReference>
<dbReference type="GO" id="GO:0004347">
    <property type="term" value="F:glucose-6-phosphate isomerase activity"/>
    <property type="evidence" value="ECO:0007669"/>
    <property type="project" value="UniProtKB-UniRule"/>
</dbReference>
<dbReference type="GO" id="GO:0048029">
    <property type="term" value="F:monosaccharide binding"/>
    <property type="evidence" value="ECO:0007669"/>
    <property type="project" value="TreeGrafter"/>
</dbReference>
<dbReference type="GO" id="GO:0006094">
    <property type="term" value="P:gluconeogenesis"/>
    <property type="evidence" value="ECO:0007669"/>
    <property type="project" value="UniProtKB-UniRule"/>
</dbReference>
<dbReference type="GO" id="GO:0051156">
    <property type="term" value="P:glucose 6-phosphate metabolic process"/>
    <property type="evidence" value="ECO:0007669"/>
    <property type="project" value="TreeGrafter"/>
</dbReference>
<dbReference type="GO" id="GO:0006096">
    <property type="term" value="P:glycolytic process"/>
    <property type="evidence" value="ECO:0007669"/>
    <property type="project" value="UniProtKB-UniRule"/>
</dbReference>
<dbReference type="CDD" id="cd05015">
    <property type="entry name" value="SIS_PGI_1"/>
    <property type="match status" value="1"/>
</dbReference>
<dbReference type="CDD" id="cd05016">
    <property type="entry name" value="SIS_PGI_2"/>
    <property type="match status" value="1"/>
</dbReference>
<dbReference type="Gene3D" id="1.10.1390.10">
    <property type="match status" value="1"/>
</dbReference>
<dbReference type="Gene3D" id="3.40.50.10490">
    <property type="entry name" value="Glucose-6-phosphate isomerase like protein, domain 1"/>
    <property type="match status" value="2"/>
</dbReference>
<dbReference type="HAMAP" id="MF_00473">
    <property type="entry name" value="G6P_isomerase"/>
    <property type="match status" value="1"/>
</dbReference>
<dbReference type="InterPro" id="IPR001672">
    <property type="entry name" value="G6P_Isomerase"/>
</dbReference>
<dbReference type="InterPro" id="IPR023096">
    <property type="entry name" value="G6P_Isomerase_C"/>
</dbReference>
<dbReference type="InterPro" id="IPR018189">
    <property type="entry name" value="Phosphoglucose_isomerase_CS"/>
</dbReference>
<dbReference type="InterPro" id="IPR046348">
    <property type="entry name" value="SIS_dom_sf"/>
</dbReference>
<dbReference type="InterPro" id="IPR035476">
    <property type="entry name" value="SIS_PGI_1"/>
</dbReference>
<dbReference type="InterPro" id="IPR035482">
    <property type="entry name" value="SIS_PGI_2"/>
</dbReference>
<dbReference type="NCBIfam" id="NF001211">
    <property type="entry name" value="PRK00179.1"/>
    <property type="match status" value="1"/>
</dbReference>
<dbReference type="PANTHER" id="PTHR11469">
    <property type="entry name" value="GLUCOSE-6-PHOSPHATE ISOMERASE"/>
    <property type="match status" value="1"/>
</dbReference>
<dbReference type="PANTHER" id="PTHR11469:SF1">
    <property type="entry name" value="GLUCOSE-6-PHOSPHATE ISOMERASE"/>
    <property type="match status" value="1"/>
</dbReference>
<dbReference type="Pfam" id="PF00342">
    <property type="entry name" value="PGI"/>
    <property type="match status" value="1"/>
</dbReference>
<dbReference type="PRINTS" id="PR00662">
    <property type="entry name" value="G6PISOMERASE"/>
</dbReference>
<dbReference type="SUPFAM" id="SSF53697">
    <property type="entry name" value="SIS domain"/>
    <property type="match status" value="1"/>
</dbReference>
<dbReference type="PROSITE" id="PS00765">
    <property type="entry name" value="P_GLUCOSE_ISOMERASE_1"/>
    <property type="match status" value="1"/>
</dbReference>
<dbReference type="PROSITE" id="PS00174">
    <property type="entry name" value="P_GLUCOSE_ISOMERASE_2"/>
    <property type="match status" value="1"/>
</dbReference>
<dbReference type="PROSITE" id="PS51463">
    <property type="entry name" value="P_GLUCOSE_ISOMERASE_3"/>
    <property type="match status" value="1"/>
</dbReference>
<accession>A3PJI8</accession>
<reference key="1">
    <citation type="submission" date="2007-02" db="EMBL/GenBank/DDBJ databases">
        <title>Complete sequence of chromosome 1 of Rhodobacter sphaeroides ATCC 17029.</title>
        <authorList>
            <person name="Copeland A."/>
            <person name="Lucas S."/>
            <person name="Lapidus A."/>
            <person name="Barry K."/>
            <person name="Detter J.C."/>
            <person name="Glavina del Rio T."/>
            <person name="Hammon N."/>
            <person name="Israni S."/>
            <person name="Dalin E."/>
            <person name="Tice H."/>
            <person name="Pitluck S."/>
            <person name="Kiss H."/>
            <person name="Brettin T."/>
            <person name="Bruce D."/>
            <person name="Han C."/>
            <person name="Tapia R."/>
            <person name="Gilna P."/>
            <person name="Schmutz J."/>
            <person name="Larimer F."/>
            <person name="Land M."/>
            <person name="Hauser L."/>
            <person name="Kyrpides N."/>
            <person name="Mikhailova N."/>
            <person name="Richardson P."/>
            <person name="Mackenzie C."/>
            <person name="Choudhary M."/>
            <person name="Donohue T.J."/>
            <person name="Kaplan S."/>
        </authorList>
    </citation>
    <scope>NUCLEOTIDE SEQUENCE [LARGE SCALE GENOMIC DNA]</scope>
    <source>
        <strain>ATCC 17029 / ATH 2.4.9</strain>
    </source>
</reference>
<protein>
    <recommendedName>
        <fullName evidence="1">Glucose-6-phosphate isomerase</fullName>
        <shortName evidence="1">GPI</shortName>
        <ecNumber evidence="1">5.3.1.9</ecNumber>
    </recommendedName>
    <alternativeName>
        <fullName evidence="1">Phosphoglucose isomerase</fullName>
        <shortName evidence="1">PGI</shortName>
    </alternativeName>
    <alternativeName>
        <fullName evidence="1">Phosphohexose isomerase</fullName>
        <shortName evidence="1">PHI</shortName>
    </alternativeName>
</protein>
<evidence type="ECO:0000255" key="1">
    <source>
        <dbReference type="HAMAP-Rule" id="MF_00473"/>
    </source>
</evidence>
<sequence>MKQIWQALKAHQQAVEHRGILDLFTDPRRAETFSTRLGDMLFDWSKTNIDHTARDLLIDLAGAAGVAEKREAMFSGEKINETEGRAVLHTALRNMDRPVQVDGVDVTPALRETHARMQAFVRDLRSGRFTGQGGPITDVVNIGIGGSDLGPAMACLALAPYADGPRCHFVSNVDGAHIHDTLQDLDPATTLVIVASKTFTTIETMTNAETAKRWMATRVSDPAAQFAAVSTAADRTAAFGIDASRVFGFEDWVGGRYSMWGPIGLALMIAIGPEAFDAFLAGGAEMDRHFREAPFAENLPVLLALVGLWHNQICGHATRAVLPYDQRLARLPAYLQQLEMESNGKRVAMDGHELTHHSGPIVWGEPGTNGQHAFYQLIHQGSRIVPCEFLVAREGHEPDLAHQHLLLVSNCLAQSEALLRGRSVEEARAVLAKKGLTGSELERQARHRVFPGNRPSTVLAYEKLTPATLGRIVALYEHRVFVEGVILGINSYDQWGVELGKELALALQPMLEGRAGTEGKDGSTAQLVAYLRS</sequence>
<organism>
    <name type="scientific">Cereibacter sphaeroides (strain ATCC 17029 / ATH 2.4.9)</name>
    <name type="common">Rhodobacter sphaeroides</name>
    <dbReference type="NCBI Taxonomy" id="349101"/>
    <lineage>
        <taxon>Bacteria</taxon>
        <taxon>Pseudomonadati</taxon>
        <taxon>Pseudomonadota</taxon>
        <taxon>Alphaproteobacteria</taxon>
        <taxon>Rhodobacterales</taxon>
        <taxon>Paracoccaceae</taxon>
        <taxon>Cereibacter</taxon>
    </lineage>
</organism>
<feature type="chain" id="PRO_1000014008" description="Glucose-6-phosphate isomerase">
    <location>
        <begin position="1"/>
        <end position="533"/>
    </location>
</feature>
<feature type="active site" description="Proton donor" evidence="1">
    <location>
        <position position="341"/>
    </location>
</feature>
<feature type="active site" evidence="1">
    <location>
        <position position="372"/>
    </location>
</feature>
<feature type="active site" evidence="1">
    <location>
        <position position="501"/>
    </location>
</feature>
<proteinExistence type="inferred from homology"/>
<gene>
    <name evidence="1" type="primary">pgi</name>
    <name type="ordered locus">Rsph17029_1394</name>
</gene>
<keyword id="KW-0963">Cytoplasm</keyword>
<keyword id="KW-0312">Gluconeogenesis</keyword>
<keyword id="KW-0324">Glycolysis</keyword>
<keyword id="KW-0413">Isomerase</keyword>
<name>G6PI_CERS1</name>
<comment type="function">
    <text evidence="1">Catalyzes the reversible isomerization of glucose-6-phosphate to fructose-6-phosphate.</text>
</comment>
<comment type="catalytic activity">
    <reaction evidence="1">
        <text>alpha-D-glucose 6-phosphate = beta-D-fructose 6-phosphate</text>
        <dbReference type="Rhea" id="RHEA:11816"/>
        <dbReference type="ChEBI" id="CHEBI:57634"/>
        <dbReference type="ChEBI" id="CHEBI:58225"/>
        <dbReference type="EC" id="5.3.1.9"/>
    </reaction>
</comment>
<comment type="pathway">
    <text evidence="1">Carbohydrate biosynthesis; gluconeogenesis.</text>
</comment>
<comment type="pathway">
    <text evidence="1">Carbohydrate degradation; glycolysis; D-glyceraldehyde 3-phosphate and glycerone phosphate from D-glucose: step 2/4.</text>
</comment>
<comment type="subcellular location">
    <subcellularLocation>
        <location evidence="1">Cytoplasm</location>
    </subcellularLocation>
</comment>
<comment type="similarity">
    <text evidence="1">Belongs to the GPI family.</text>
</comment>